<organism>
    <name type="scientific">Rhodospirillum rubrum (strain ATCC 11170 / ATH 1.1.1 / DSM 467 / LMG 4362 / NCIMB 8255 / S1)</name>
    <dbReference type="NCBI Taxonomy" id="269796"/>
    <lineage>
        <taxon>Bacteria</taxon>
        <taxon>Pseudomonadati</taxon>
        <taxon>Pseudomonadota</taxon>
        <taxon>Alphaproteobacteria</taxon>
        <taxon>Rhodospirillales</taxon>
        <taxon>Rhodospirillaceae</taxon>
        <taxon>Rhodospirillum</taxon>
    </lineage>
</organism>
<gene>
    <name evidence="1" type="primary">mutS</name>
    <name type="ordered locus">Rru_A3541</name>
</gene>
<sequence length="929" mass="98820">MLFFADRSPFVRPLSGYAPVTPAAPRSTGSAAAPPPSPAVLDDRSGTEGDVTPMMAQYLAVKAAHPDCLLFYRMGDFYEMFFEDAVKAAETLDIALTKRGRHAGADIPMCGVPIHSHEGYLSRLIRAGIKVAICEQMEDPAEARRQRGYKAVVRRDVIRVVTAGTLTEDELLDARAHNYLAAVVRLRDAVGMAWVDVSTGDLVAQPLAEADIGPALARLAPGEVLMPEKLAGDPALREILAPLAGRISPLPASRFDSENARKRVEGLFGVKALDGFGGFGRAEVAAIGALIDYVELTQVGRLPRLSPPRRLSLGAILEIDGATRRNLELTETLGGGRKGSLLARIDCTVTGAGARLLAERLAAPLTDPAQIGARLDGVGFLVSAERVRGDLRDTLRGCPDIARALSRLSLGRGGPRDLAAIGEALSRIPALRVLVVGAGLGEPPTELTAALIDLGSHEGLVDLLGRALDADLPLLARDGGFIRPGYDAGLDELRALRDEGRRLIAGLQARYASETAIPALKIKHNNVLGYFIEVAAGRADKLMAAGGPFLHRQTLASQVRFTTVELSELEDKIRGAADKALALEQALFATLCAEVLGCAADIARAANGLACLDVAAALADLAARERYARPVVDNSTAFRIHKGRHPVVEAALADQAGPAFVANDCDLAPDQRLWLLTGPNMAGKSTFLRQNALIAVLAQMGSFVPAESAEIGVIDRLFSRVGAADDLARGRSTFMVEMVETAAILNQATERSLVILDEIGRGTATYDGLSIAWATVESLHDATRCRALFATHYHELTALASRLDRLSCHTLRIKEWKDQVVFLHEVGPGAADRSYGIHVAKLAGLPAAVIARAEQVLAILEKGDASSAATRLADDLPLFAAARPRAGLPTPPPGPHPLAEALNAINPDEMTPREALDALYRLKAVMKRE</sequence>
<dbReference type="EMBL" id="CP000230">
    <property type="protein sequence ID" value="ABC24335.1"/>
    <property type="molecule type" value="Genomic_DNA"/>
</dbReference>
<dbReference type="RefSeq" id="YP_428622.1">
    <property type="nucleotide sequence ID" value="NC_007643.1"/>
</dbReference>
<dbReference type="SMR" id="Q2RNG0"/>
<dbReference type="STRING" id="269796.Rru_A3541"/>
<dbReference type="EnsemblBacteria" id="ABC24335">
    <property type="protein sequence ID" value="ABC24335"/>
    <property type="gene ID" value="Rru_A3541"/>
</dbReference>
<dbReference type="KEGG" id="rru:Rru_A3541"/>
<dbReference type="PATRIC" id="fig|269796.9.peg.3658"/>
<dbReference type="eggNOG" id="COG0249">
    <property type="taxonomic scope" value="Bacteria"/>
</dbReference>
<dbReference type="HOGENOM" id="CLU_002472_3_1_5"/>
<dbReference type="PhylomeDB" id="Q2RNG0"/>
<dbReference type="Proteomes" id="UP000001929">
    <property type="component" value="Chromosome"/>
</dbReference>
<dbReference type="GO" id="GO:0005829">
    <property type="term" value="C:cytosol"/>
    <property type="evidence" value="ECO:0007669"/>
    <property type="project" value="TreeGrafter"/>
</dbReference>
<dbReference type="GO" id="GO:0005524">
    <property type="term" value="F:ATP binding"/>
    <property type="evidence" value="ECO:0007669"/>
    <property type="project" value="UniProtKB-UniRule"/>
</dbReference>
<dbReference type="GO" id="GO:0140664">
    <property type="term" value="F:ATP-dependent DNA damage sensor activity"/>
    <property type="evidence" value="ECO:0007669"/>
    <property type="project" value="InterPro"/>
</dbReference>
<dbReference type="GO" id="GO:0003684">
    <property type="term" value="F:damaged DNA binding"/>
    <property type="evidence" value="ECO:0007669"/>
    <property type="project" value="UniProtKB-UniRule"/>
</dbReference>
<dbReference type="GO" id="GO:0030983">
    <property type="term" value="F:mismatched DNA binding"/>
    <property type="evidence" value="ECO:0007669"/>
    <property type="project" value="InterPro"/>
</dbReference>
<dbReference type="GO" id="GO:0006298">
    <property type="term" value="P:mismatch repair"/>
    <property type="evidence" value="ECO:0007669"/>
    <property type="project" value="UniProtKB-UniRule"/>
</dbReference>
<dbReference type="CDD" id="cd03284">
    <property type="entry name" value="ABC_MutS1"/>
    <property type="match status" value="1"/>
</dbReference>
<dbReference type="FunFam" id="3.40.1170.10:FF:000001">
    <property type="entry name" value="DNA mismatch repair protein MutS"/>
    <property type="match status" value="1"/>
</dbReference>
<dbReference type="FunFam" id="3.40.50.300:FF:000870">
    <property type="entry name" value="MutS protein homolog 4"/>
    <property type="match status" value="1"/>
</dbReference>
<dbReference type="Gene3D" id="1.10.1420.10">
    <property type="match status" value="2"/>
</dbReference>
<dbReference type="Gene3D" id="6.10.140.430">
    <property type="match status" value="1"/>
</dbReference>
<dbReference type="Gene3D" id="3.40.1170.10">
    <property type="entry name" value="DNA repair protein MutS, domain I"/>
    <property type="match status" value="1"/>
</dbReference>
<dbReference type="Gene3D" id="3.30.420.110">
    <property type="entry name" value="MutS, connector domain"/>
    <property type="match status" value="1"/>
</dbReference>
<dbReference type="Gene3D" id="3.40.50.300">
    <property type="entry name" value="P-loop containing nucleotide triphosphate hydrolases"/>
    <property type="match status" value="1"/>
</dbReference>
<dbReference type="HAMAP" id="MF_00096">
    <property type="entry name" value="MutS"/>
    <property type="match status" value="1"/>
</dbReference>
<dbReference type="InterPro" id="IPR005748">
    <property type="entry name" value="DNA_mismatch_repair_MutS"/>
</dbReference>
<dbReference type="InterPro" id="IPR007695">
    <property type="entry name" value="DNA_mismatch_repair_MutS-lik_N"/>
</dbReference>
<dbReference type="InterPro" id="IPR017261">
    <property type="entry name" value="DNA_mismatch_repair_MutS/MSH"/>
</dbReference>
<dbReference type="InterPro" id="IPR000432">
    <property type="entry name" value="DNA_mismatch_repair_MutS_C"/>
</dbReference>
<dbReference type="InterPro" id="IPR007861">
    <property type="entry name" value="DNA_mismatch_repair_MutS_clamp"/>
</dbReference>
<dbReference type="InterPro" id="IPR007696">
    <property type="entry name" value="DNA_mismatch_repair_MutS_core"/>
</dbReference>
<dbReference type="InterPro" id="IPR016151">
    <property type="entry name" value="DNA_mismatch_repair_MutS_N"/>
</dbReference>
<dbReference type="InterPro" id="IPR036187">
    <property type="entry name" value="DNA_mismatch_repair_MutS_sf"/>
</dbReference>
<dbReference type="InterPro" id="IPR007860">
    <property type="entry name" value="DNA_mmatch_repair_MutS_con_dom"/>
</dbReference>
<dbReference type="InterPro" id="IPR045076">
    <property type="entry name" value="MutS"/>
</dbReference>
<dbReference type="InterPro" id="IPR036678">
    <property type="entry name" value="MutS_con_dom_sf"/>
</dbReference>
<dbReference type="InterPro" id="IPR027417">
    <property type="entry name" value="P-loop_NTPase"/>
</dbReference>
<dbReference type="NCBIfam" id="TIGR01070">
    <property type="entry name" value="mutS1"/>
    <property type="match status" value="1"/>
</dbReference>
<dbReference type="NCBIfam" id="NF003810">
    <property type="entry name" value="PRK05399.1"/>
    <property type="match status" value="1"/>
</dbReference>
<dbReference type="PANTHER" id="PTHR11361:SF34">
    <property type="entry name" value="DNA MISMATCH REPAIR PROTEIN MSH1, MITOCHONDRIAL"/>
    <property type="match status" value="1"/>
</dbReference>
<dbReference type="PANTHER" id="PTHR11361">
    <property type="entry name" value="DNA MISMATCH REPAIR PROTEIN MUTS FAMILY MEMBER"/>
    <property type="match status" value="1"/>
</dbReference>
<dbReference type="Pfam" id="PF01624">
    <property type="entry name" value="MutS_I"/>
    <property type="match status" value="1"/>
</dbReference>
<dbReference type="Pfam" id="PF05188">
    <property type="entry name" value="MutS_II"/>
    <property type="match status" value="1"/>
</dbReference>
<dbReference type="Pfam" id="PF05192">
    <property type="entry name" value="MutS_III"/>
    <property type="match status" value="1"/>
</dbReference>
<dbReference type="Pfam" id="PF05190">
    <property type="entry name" value="MutS_IV"/>
    <property type="match status" value="1"/>
</dbReference>
<dbReference type="Pfam" id="PF00488">
    <property type="entry name" value="MutS_V"/>
    <property type="match status" value="1"/>
</dbReference>
<dbReference type="PIRSF" id="PIRSF037677">
    <property type="entry name" value="DNA_mis_repair_Msh6"/>
    <property type="match status" value="1"/>
</dbReference>
<dbReference type="SMART" id="SM00534">
    <property type="entry name" value="MUTSac"/>
    <property type="match status" value="1"/>
</dbReference>
<dbReference type="SMART" id="SM00533">
    <property type="entry name" value="MUTSd"/>
    <property type="match status" value="1"/>
</dbReference>
<dbReference type="SUPFAM" id="SSF55271">
    <property type="entry name" value="DNA repair protein MutS, domain I"/>
    <property type="match status" value="1"/>
</dbReference>
<dbReference type="SUPFAM" id="SSF53150">
    <property type="entry name" value="DNA repair protein MutS, domain II"/>
    <property type="match status" value="1"/>
</dbReference>
<dbReference type="SUPFAM" id="SSF48334">
    <property type="entry name" value="DNA repair protein MutS, domain III"/>
    <property type="match status" value="1"/>
</dbReference>
<dbReference type="SUPFAM" id="SSF52540">
    <property type="entry name" value="P-loop containing nucleoside triphosphate hydrolases"/>
    <property type="match status" value="1"/>
</dbReference>
<dbReference type="PROSITE" id="PS00486">
    <property type="entry name" value="DNA_MISMATCH_REPAIR_2"/>
    <property type="match status" value="1"/>
</dbReference>
<keyword id="KW-0067">ATP-binding</keyword>
<keyword id="KW-0227">DNA damage</keyword>
<keyword id="KW-0234">DNA repair</keyword>
<keyword id="KW-0238">DNA-binding</keyword>
<keyword id="KW-0547">Nucleotide-binding</keyword>
<keyword id="KW-1185">Reference proteome</keyword>
<evidence type="ECO:0000255" key="1">
    <source>
        <dbReference type="HAMAP-Rule" id="MF_00096"/>
    </source>
</evidence>
<evidence type="ECO:0000256" key="2">
    <source>
        <dbReference type="SAM" id="MobiDB-lite"/>
    </source>
</evidence>
<reference key="1">
    <citation type="journal article" date="2011" name="Stand. Genomic Sci.">
        <title>Complete genome sequence of Rhodospirillum rubrum type strain (S1).</title>
        <authorList>
            <person name="Munk A.C."/>
            <person name="Copeland A."/>
            <person name="Lucas S."/>
            <person name="Lapidus A."/>
            <person name="Del Rio T.G."/>
            <person name="Barry K."/>
            <person name="Detter J.C."/>
            <person name="Hammon N."/>
            <person name="Israni S."/>
            <person name="Pitluck S."/>
            <person name="Brettin T."/>
            <person name="Bruce D."/>
            <person name="Han C."/>
            <person name="Tapia R."/>
            <person name="Gilna P."/>
            <person name="Schmutz J."/>
            <person name="Larimer F."/>
            <person name="Land M."/>
            <person name="Kyrpides N.C."/>
            <person name="Mavromatis K."/>
            <person name="Richardson P."/>
            <person name="Rohde M."/>
            <person name="Goeker M."/>
            <person name="Klenk H.P."/>
            <person name="Zhang Y."/>
            <person name="Roberts G.P."/>
            <person name="Reslewic S."/>
            <person name="Schwartz D.C."/>
        </authorList>
    </citation>
    <scope>NUCLEOTIDE SEQUENCE [LARGE SCALE GENOMIC DNA]</scope>
    <source>
        <strain>ATCC 11170 / ATH 1.1.1 / DSM 467 / LMG 4362 / NCIMB 8255 / S1</strain>
    </source>
</reference>
<feature type="chain" id="PRO_0000335217" description="DNA mismatch repair protein MutS">
    <location>
        <begin position="1"/>
        <end position="929"/>
    </location>
</feature>
<feature type="region of interest" description="Disordered" evidence="2">
    <location>
        <begin position="22"/>
        <end position="46"/>
    </location>
</feature>
<feature type="compositionally biased region" description="Low complexity" evidence="2">
    <location>
        <begin position="23"/>
        <end position="32"/>
    </location>
</feature>
<feature type="binding site" evidence="1">
    <location>
        <begin position="678"/>
        <end position="685"/>
    </location>
    <ligand>
        <name>ATP</name>
        <dbReference type="ChEBI" id="CHEBI:30616"/>
    </ligand>
</feature>
<proteinExistence type="inferred from homology"/>
<accession>Q2RNG0</accession>
<name>MUTS_RHORT</name>
<comment type="function">
    <text evidence="1">This protein is involved in the repair of mismatches in DNA. It is possible that it carries out the mismatch recognition step. This protein has a weak ATPase activity.</text>
</comment>
<comment type="similarity">
    <text evidence="1">Belongs to the DNA mismatch repair MutS family.</text>
</comment>
<protein>
    <recommendedName>
        <fullName evidence="1">DNA mismatch repair protein MutS</fullName>
    </recommendedName>
</protein>